<keyword id="KW-0002">3D-structure</keyword>
<keyword id="KW-1185">Reference proteome</keyword>
<name>TSSB1_PSEAE</name>
<dbReference type="EMBL" id="AE004091">
    <property type="protein sequence ID" value="AAG03473.1"/>
    <property type="molecule type" value="Genomic_DNA"/>
</dbReference>
<dbReference type="PIR" id="H83634">
    <property type="entry name" value="H83634"/>
</dbReference>
<dbReference type="RefSeq" id="NP_248773.1">
    <property type="nucleotide sequence ID" value="NC_002516.2"/>
</dbReference>
<dbReference type="PDB" id="4UQY">
    <property type="method" value="X-ray"/>
    <property type="resolution" value="1.60 A"/>
    <property type="chains" value="B=1-20"/>
</dbReference>
<dbReference type="PDB" id="4UQZ">
    <property type="method" value="X-ray"/>
    <property type="resolution" value="1.60 A"/>
    <property type="chains" value="B=1-172"/>
</dbReference>
<dbReference type="PDB" id="5N8N">
    <property type="method" value="EM"/>
    <property type="resolution" value="3.28 A"/>
    <property type="chains" value="A/C/E/G/I/K/M/O/Q/S/U/W/Y/a/c=4-135"/>
</dbReference>
<dbReference type="PDBsum" id="4UQY"/>
<dbReference type="PDBsum" id="4UQZ"/>
<dbReference type="PDBsum" id="5N8N"/>
<dbReference type="SMR" id="Q9I749"/>
<dbReference type="STRING" id="208964.PA0083"/>
<dbReference type="PaxDb" id="208964-PA0083"/>
<dbReference type="DNASU" id="879476"/>
<dbReference type="GeneID" id="879476"/>
<dbReference type="KEGG" id="pae:PA0083"/>
<dbReference type="PATRIC" id="fig|208964.12.peg.87"/>
<dbReference type="PseudoCAP" id="PA0083"/>
<dbReference type="HOGENOM" id="CLU_111033_0_1_6"/>
<dbReference type="InParanoid" id="Q9I749"/>
<dbReference type="OrthoDB" id="9789942at2"/>
<dbReference type="PhylomeDB" id="Q9I749"/>
<dbReference type="BioCyc" id="PAER208964:G1FZ6-85-MONOMER"/>
<dbReference type="EvolutionaryTrace" id="Q9I749"/>
<dbReference type="Proteomes" id="UP000002438">
    <property type="component" value="Chromosome"/>
</dbReference>
<dbReference type="InterPro" id="IPR008312">
    <property type="entry name" value="T6SS_TssB1"/>
</dbReference>
<dbReference type="NCBIfam" id="TIGR03358">
    <property type="entry name" value="VI_chp_5"/>
    <property type="match status" value="1"/>
</dbReference>
<dbReference type="PANTHER" id="PTHR35850">
    <property type="entry name" value="CYTOPLASMIC PROTEIN-RELATED"/>
    <property type="match status" value="1"/>
</dbReference>
<dbReference type="PANTHER" id="PTHR35850:SF1">
    <property type="entry name" value="TYPE VI SECRETION SYSTEM SHEATH PROTEIN TSSB1"/>
    <property type="match status" value="1"/>
</dbReference>
<dbReference type="Pfam" id="PF05591">
    <property type="entry name" value="T6SS_VipA"/>
    <property type="match status" value="1"/>
</dbReference>
<dbReference type="PIRSF" id="PIRSF028301">
    <property type="entry name" value="UCP028301"/>
    <property type="match status" value="1"/>
</dbReference>
<feature type="chain" id="PRO_0000449262" description="Type VI secretion system sheath protein TssB1">
    <location>
        <begin position="1"/>
        <end position="172"/>
    </location>
</feature>
<feature type="helix" evidence="11">
    <location>
        <begin position="7"/>
        <end position="14"/>
    </location>
</feature>
<feature type="strand" evidence="11">
    <location>
        <begin position="18"/>
        <end position="23"/>
    </location>
</feature>
<feature type="strand" evidence="10">
    <location>
        <begin position="26"/>
        <end position="28"/>
    </location>
</feature>
<feature type="strand" evidence="11">
    <location>
        <begin position="38"/>
        <end position="44"/>
    </location>
</feature>
<feature type="strand" evidence="11">
    <location>
        <begin position="63"/>
        <end position="65"/>
    </location>
</feature>
<feature type="turn" evidence="11">
    <location>
        <begin position="67"/>
        <end position="69"/>
    </location>
</feature>
<feature type="helix" evidence="11">
    <location>
        <begin position="70"/>
        <end position="77"/>
    </location>
</feature>
<feature type="strand" evidence="11">
    <location>
        <begin position="80"/>
        <end position="86"/>
    </location>
</feature>
<feature type="strand" evidence="11">
    <location>
        <begin position="89"/>
        <end position="91"/>
    </location>
</feature>
<feature type="strand" evidence="11">
    <location>
        <begin position="93"/>
        <end position="100"/>
    </location>
</feature>
<feature type="helix" evidence="11">
    <location>
        <begin position="104"/>
        <end position="107"/>
    </location>
</feature>
<feature type="helix" evidence="11">
    <location>
        <begin position="109"/>
        <end position="115"/>
    </location>
</feature>
<feature type="helix" evidence="11">
    <location>
        <begin position="117"/>
        <end position="133"/>
    </location>
</feature>
<reference key="1">
    <citation type="journal article" date="2000" name="Nature">
        <title>Complete genome sequence of Pseudomonas aeruginosa PAO1, an opportunistic pathogen.</title>
        <authorList>
            <person name="Stover C.K."/>
            <person name="Pham X.-Q.T."/>
            <person name="Erwin A.L."/>
            <person name="Mizoguchi S.D."/>
            <person name="Warrener P."/>
            <person name="Hickey M.J."/>
            <person name="Brinkman F.S.L."/>
            <person name="Hufnagle W.O."/>
            <person name="Kowalik D.J."/>
            <person name="Lagrou M."/>
            <person name="Garber R.L."/>
            <person name="Goltry L."/>
            <person name="Tolentino E."/>
            <person name="Westbrock-Wadman S."/>
            <person name="Yuan Y."/>
            <person name="Brody L.L."/>
            <person name="Coulter S.N."/>
            <person name="Folger K.R."/>
            <person name="Kas A."/>
            <person name="Larbig K."/>
            <person name="Lim R.M."/>
            <person name="Smith K.A."/>
            <person name="Spencer D.H."/>
            <person name="Wong G.K.-S."/>
            <person name="Wu Z."/>
            <person name="Paulsen I.T."/>
            <person name="Reizer J."/>
            <person name="Saier M.H. Jr."/>
            <person name="Hancock R.E.W."/>
            <person name="Lory S."/>
            <person name="Olson M.V."/>
        </authorList>
    </citation>
    <scope>NUCLEOTIDE SEQUENCE [LARGE SCALE GENOMIC DNA]</scope>
    <source>
        <strain>ATCC 15692 / DSM 22644 / CIP 104116 / JCM 14847 / LMG 12228 / 1C / PRS 101 / PAO1</strain>
    </source>
</reference>
<reference key="2">
    <citation type="journal article" date="2012" name="Mol. Microbiol.">
        <title>The archetype Pseudomonas aeruginosa proteins TssB and TagJ form a novel subcomplex in the bacterial type VI secretion system.</title>
        <authorList>
            <person name="Lossi N.S."/>
            <person name="Manoli E."/>
            <person name="Simpson P."/>
            <person name="Jones C."/>
            <person name="Hui K."/>
            <person name="Dajani R."/>
            <person name="Coulthurst S.J."/>
            <person name="Freemont P."/>
            <person name="Filloux A."/>
        </authorList>
    </citation>
    <scope>FUNCTION</scope>
    <scope>INTERACTION WITH TAGJ</scope>
    <scope>DISRUPTION PHENOTYPE</scope>
    <source>
        <strain>PAK</strain>
    </source>
</reference>
<reference key="3">
    <citation type="journal article" date="2013" name="J. Biol. Chem.">
        <title>The HsiB1C1 (TssB-TssC) complex of the Pseudomonas aeruginosa type VI secretion system forms a bacteriophage tail sheathlike structure.</title>
        <authorList>
            <person name="Lossi N.S."/>
            <person name="Manoli E."/>
            <person name="Foerster A."/>
            <person name="Dajani R."/>
            <person name="Pape T."/>
            <person name="Freemont P."/>
            <person name="Filloux A."/>
        </authorList>
    </citation>
    <scope>FUNCTION</scope>
    <scope>INTERACTION WITH TSSC1</scope>
</reference>
<reference key="4">
    <citation type="journal article" date="2016" name="EMBO J.">
        <title>TssA forms a gp6-like ring attached to the type VI secretion sheath.</title>
        <authorList>
            <person name="Planamente S."/>
            <person name="Salih O."/>
            <person name="Manoli E."/>
            <person name="Albesa-Jove D."/>
            <person name="Freemont P.S."/>
            <person name="Filloux A."/>
        </authorList>
    </citation>
    <scope>INTERACTION WITH TSSA1</scope>
</reference>
<reference evidence="7 8" key="5">
    <citation type="journal article" date="2014" name="J. Biol. Chem.">
        <title>Coevolution of the ATPase ClpV, the sheath proteins TssB and TssC, and the accessory protein TagJ/HsiE1 distinguishes type VI secretion classes.</title>
        <authorList>
            <person name="Foerster A."/>
            <person name="Planamente S."/>
            <person name="Manoli E."/>
            <person name="Lossi N.S."/>
            <person name="Freemont P.S."/>
            <person name="Filloux A."/>
        </authorList>
    </citation>
    <scope>X-RAY CRYSTALLOGRAPHY (1.60 ANGSTROMS)</scope>
    <scope>INTERACTION WITH TAGJ AND CLPV1</scope>
    <scope>FUNCTION</scope>
</reference>
<reference evidence="9" key="6">
    <citation type="journal article" date="2018" name="Structure">
        <title>Atomic Structure of Type VI Contractile Sheath from Pseudomonas aeruginosa.</title>
        <authorList>
            <person name="Salih O."/>
            <person name="He S."/>
            <person name="Planamente S."/>
            <person name="Stach L."/>
            <person name="MacDonald J.T."/>
            <person name="Manoli E."/>
            <person name="Scheres S.H.W."/>
            <person name="Filloux A."/>
            <person name="Freemont P.S."/>
        </authorList>
    </citation>
    <scope>STRUCTURE BY ELECTRON MICROSCOPY (3.28 ANGSTROMS) OF 4-135</scope>
    <scope>FUNCTION</scope>
    <scope>INTERACTION WITH TSSC1</scope>
</reference>
<gene>
    <name evidence="6" type="primary">tssB1</name>
    <name type="ordered locus">PA0083</name>
</gene>
<evidence type="ECO:0000269" key="1">
    <source>
    </source>
</evidence>
<evidence type="ECO:0000269" key="2">
    <source>
    </source>
</evidence>
<evidence type="ECO:0000269" key="3">
    <source>
    </source>
</evidence>
<evidence type="ECO:0000269" key="4">
    <source>
    </source>
</evidence>
<evidence type="ECO:0000269" key="5">
    <source>
    </source>
</evidence>
<evidence type="ECO:0000303" key="6">
    <source>
    </source>
</evidence>
<evidence type="ECO:0007744" key="7">
    <source>
        <dbReference type="PDB" id="4UQY"/>
    </source>
</evidence>
<evidence type="ECO:0007744" key="8">
    <source>
        <dbReference type="PDB" id="4UQZ"/>
    </source>
</evidence>
<evidence type="ECO:0007744" key="9">
    <source>
        <dbReference type="PDB" id="5N8N"/>
    </source>
</evidence>
<evidence type="ECO:0007829" key="10">
    <source>
        <dbReference type="PDB" id="4UQZ"/>
    </source>
</evidence>
<evidence type="ECO:0007829" key="11">
    <source>
        <dbReference type="PDB" id="5N8N"/>
    </source>
</evidence>
<organism>
    <name type="scientific">Pseudomonas aeruginosa (strain ATCC 15692 / DSM 22644 / CIP 104116 / JCM 14847 / LMG 12228 / 1C / PRS 101 / PAO1)</name>
    <dbReference type="NCBI Taxonomy" id="208964"/>
    <lineage>
        <taxon>Bacteria</taxon>
        <taxon>Pseudomonadati</taxon>
        <taxon>Pseudomonadota</taxon>
        <taxon>Gammaproteobacteria</taxon>
        <taxon>Pseudomonadales</taxon>
        <taxon>Pseudomonadaceae</taxon>
        <taxon>Pseudomonas</taxon>
    </lineage>
</organism>
<accession>Q9I749</accession>
<protein>
    <recommendedName>
        <fullName evidence="6">Type VI secretion system sheath protein TssB1</fullName>
    </recommendedName>
    <alternativeName>
        <fullName>Sheath protein HsiB1</fullName>
    </alternativeName>
</protein>
<comment type="function">
    <text evidence="1 2 3 5">Core component of the H1 type VI (H1-T6SS) secretion system that plays a role in the release of toxins targeting both eukaryotic and prokaryotic species. Forms the sheath of the structure by assembling into tubules together with TssC1 resulting in the stacking of cogwheel-like structures showing predominantly a 12-fold symmetry (PubMed:22906320, PubMed:23341461, PubMed:25305017). The sheath contracts to provide the energy needed for effector delivery (PubMed:29307484).</text>
</comment>
<comment type="subunit">
    <text evidence="1 3 4 5">Forms a heterodimer with TssC1. Heterodimers assemble to form the sheath of the T6SS machinery (PubMed:29307484). Interacts with TagJ (PubMed:22906320, PubMed:25305017). Interacts with TssA1 (PubMed:27288401).</text>
</comment>
<comment type="disruption phenotype">
    <text evidence="1">Deletion mutant shows a clear reduction in E. coli killing.</text>
</comment>
<proteinExistence type="evidence at protein level"/>
<sequence length="172" mass="18786">MGSTTSSQKFIARNRAPRVQIEYDVELYGAEKKVQLPFVMGVMADLAGKPAEPQAAVADRKFLEIDVDNFDARLKAMKPRVAFNVPNVLTGEGNLSLDITFESMDDFSPAAVARKVDSLNKLLEARTQLANLLTYMDGKTGAEEMIMKAIKDPALLQALASAPKPKDDEPQA</sequence>